<sequence length="547" mass="63465">MGKEEKVIRPIVHFSPSVWADQFHIFRDEQAEQANVEQVVNEMRKDVRKDIMSSLDVQAEHTNLLKLIDAIQRLGIAYHFEEEIEQALKHIYDTYGDDWKGRSPSLWFRILRQQGYYVSCDILKNYKEEDGSFKESLANNVEGLLELYEATYLGVQGEDILDDALVFTRTCLEKIAKDLVHSNPTLSTHIQEALKQPLHKRLTRLEALCYIPMYEQLASHNESLLKLAKLDFNLLQSLHRKELSEVSRWWKGLDVPNNLPYARDRMVECYFWALGVYFEPKYSRARIFLAKVISLATVLDDTYDAYGIYEELKIFTEAIQGWSITCMHTLPEYMKLLYEGVLNIYKEMEEIIGSEGKAHHLSYAKESMKEFIRSYMMEAKWANEGYVPTAEEHMAVAFVSSGYSMLATTCFVGMGDIVTDEAFEWSLTKPPIIKASCAIARLMDDIHSQKDEKERIHVASSVESYMKQYDVTEEHVHKVFHQKIEDAWKDITRESLVCKDIPMPLMMRVINLARVMDVLYTHKDGFTNVGEELQDHIKSLLVHPIPI</sequence>
<feature type="chain" id="PRO_0000421925" description="(-)-beta-caryophyllene synthase">
    <location>
        <begin position="1"/>
        <end position="547"/>
    </location>
</feature>
<feature type="short sequence motif" description="DDXXD motif">
    <location>
        <begin position="300"/>
        <end position="304"/>
    </location>
</feature>
<feature type="binding site" evidence="1">
    <location>
        <position position="300"/>
    </location>
    <ligand>
        <name>Mg(2+)</name>
        <dbReference type="ChEBI" id="CHEBI:18420"/>
        <label>1</label>
    </ligand>
</feature>
<feature type="binding site" evidence="1">
    <location>
        <position position="300"/>
    </location>
    <ligand>
        <name>Mg(2+)</name>
        <dbReference type="ChEBI" id="CHEBI:18420"/>
        <label>2</label>
    </ligand>
</feature>
<feature type="binding site" evidence="1">
    <location>
        <position position="304"/>
    </location>
    <ligand>
        <name>Mg(2+)</name>
        <dbReference type="ChEBI" id="CHEBI:18420"/>
        <label>1</label>
    </ligand>
</feature>
<feature type="binding site" evidence="1">
    <location>
        <position position="304"/>
    </location>
    <ligand>
        <name>Mg(2+)</name>
        <dbReference type="ChEBI" id="CHEBI:18420"/>
        <label>2</label>
    </ligand>
</feature>
<feature type="binding site" evidence="1">
    <location>
        <position position="444"/>
    </location>
    <ligand>
        <name>Mg(2+)</name>
        <dbReference type="ChEBI" id="CHEBI:18420"/>
        <label>3</label>
    </ligand>
</feature>
<feature type="binding site" evidence="1">
    <location>
        <position position="448"/>
    </location>
    <ligand>
        <name>Mg(2+)</name>
        <dbReference type="ChEBI" id="CHEBI:18420"/>
        <label>3</label>
    </ligand>
</feature>
<feature type="binding site" evidence="1">
    <location>
        <position position="452"/>
    </location>
    <ligand>
        <name>Mg(2+)</name>
        <dbReference type="ChEBI" id="CHEBI:18420"/>
        <label>3</label>
    </ligand>
</feature>
<organism>
    <name type="scientific">Matricaria chamomilla var. recutita</name>
    <name type="common">German chamomile</name>
    <name type="synonym">Chamomilla recutita</name>
    <dbReference type="NCBI Taxonomy" id="127986"/>
    <lineage>
        <taxon>Eukaryota</taxon>
        <taxon>Viridiplantae</taxon>
        <taxon>Streptophyta</taxon>
        <taxon>Embryophyta</taxon>
        <taxon>Tracheophyta</taxon>
        <taxon>Spermatophyta</taxon>
        <taxon>Magnoliopsida</taxon>
        <taxon>eudicotyledons</taxon>
        <taxon>Gunneridae</taxon>
        <taxon>Pentapetalae</taxon>
        <taxon>asterids</taxon>
        <taxon>campanulids</taxon>
        <taxon>Asterales</taxon>
        <taxon>Asteraceae</taxon>
        <taxon>Asteroideae</taxon>
        <taxon>Anthemideae</taxon>
        <taxon>Matricariinae</taxon>
        <taxon>Matricaria</taxon>
    </lineage>
</organism>
<accession>I6RAQ6</accession>
<proteinExistence type="evidence at protein level"/>
<evidence type="ECO:0000250" key="1"/>
<evidence type="ECO:0000269" key="2">
    <source>
    </source>
</evidence>
<evidence type="ECO:0000305" key="3"/>
<dbReference type="EC" id="4.2.3.57"/>
<dbReference type="EMBL" id="JQ255375">
    <property type="protein sequence ID" value="AFM43734.1"/>
    <property type="molecule type" value="mRNA"/>
</dbReference>
<dbReference type="SMR" id="I6RAQ6"/>
<dbReference type="UniPathway" id="UPA00213"/>
<dbReference type="GO" id="GO:0080016">
    <property type="term" value="F:(-)-E-beta-caryophyllene synthase activity"/>
    <property type="evidence" value="ECO:0007669"/>
    <property type="project" value="UniProtKB-EC"/>
</dbReference>
<dbReference type="GO" id="GO:0000287">
    <property type="term" value="F:magnesium ion binding"/>
    <property type="evidence" value="ECO:0007669"/>
    <property type="project" value="InterPro"/>
</dbReference>
<dbReference type="GO" id="GO:0016102">
    <property type="term" value="P:diterpenoid biosynthetic process"/>
    <property type="evidence" value="ECO:0007669"/>
    <property type="project" value="InterPro"/>
</dbReference>
<dbReference type="CDD" id="cd00684">
    <property type="entry name" value="Terpene_cyclase_plant_C1"/>
    <property type="match status" value="1"/>
</dbReference>
<dbReference type="FunFam" id="1.10.600.10:FF:000007">
    <property type="entry name" value="Isoprene synthase, chloroplastic"/>
    <property type="match status" value="1"/>
</dbReference>
<dbReference type="FunFam" id="1.50.10.130:FF:000001">
    <property type="entry name" value="Isoprene synthase, chloroplastic"/>
    <property type="match status" value="1"/>
</dbReference>
<dbReference type="Gene3D" id="1.10.600.10">
    <property type="entry name" value="Farnesyl Diphosphate Synthase"/>
    <property type="match status" value="1"/>
</dbReference>
<dbReference type="Gene3D" id="1.50.10.130">
    <property type="entry name" value="Terpene synthase, N-terminal domain"/>
    <property type="match status" value="1"/>
</dbReference>
<dbReference type="InterPro" id="IPR008949">
    <property type="entry name" value="Isoprenoid_synthase_dom_sf"/>
</dbReference>
<dbReference type="InterPro" id="IPR034741">
    <property type="entry name" value="Terpene_cyclase-like_1_C"/>
</dbReference>
<dbReference type="InterPro" id="IPR044814">
    <property type="entry name" value="Terpene_cyclase_plant_C1"/>
</dbReference>
<dbReference type="InterPro" id="IPR001906">
    <property type="entry name" value="Terpene_synth_N"/>
</dbReference>
<dbReference type="InterPro" id="IPR036965">
    <property type="entry name" value="Terpene_synth_N_sf"/>
</dbReference>
<dbReference type="InterPro" id="IPR050148">
    <property type="entry name" value="Terpene_synthase-like"/>
</dbReference>
<dbReference type="InterPro" id="IPR005630">
    <property type="entry name" value="Terpene_synthase_metal-bd"/>
</dbReference>
<dbReference type="InterPro" id="IPR008930">
    <property type="entry name" value="Terpenoid_cyclase/PrenylTrfase"/>
</dbReference>
<dbReference type="PANTHER" id="PTHR31225">
    <property type="entry name" value="OS04G0344100 PROTEIN-RELATED"/>
    <property type="match status" value="1"/>
</dbReference>
<dbReference type="PANTHER" id="PTHR31225:SF196">
    <property type="entry name" value="TERPENOID CYCLASES_PROTEIN PRENYLTRANSFERASE ALPHA-ALPHA TOROID-RELATED"/>
    <property type="match status" value="1"/>
</dbReference>
<dbReference type="Pfam" id="PF01397">
    <property type="entry name" value="Terpene_synth"/>
    <property type="match status" value="1"/>
</dbReference>
<dbReference type="Pfam" id="PF03936">
    <property type="entry name" value="Terpene_synth_C"/>
    <property type="match status" value="1"/>
</dbReference>
<dbReference type="SFLD" id="SFLDS00005">
    <property type="entry name" value="Isoprenoid_Synthase_Type_I"/>
    <property type="match status" value="1"/>
</dbReference>
<dbReference type="SFLD" id="SFLDG01019">
    <property type="entry name" value="Terpene_Cyclase_Like_1_C_Termi"/>
    <property type="match status" value="1"/>
</dbReference>
<dbReference type="SUPFAM" id="SSF48239">
    <property type="entry name" value="Terpenoid cyclases/Protein prenyltransferases"/>
    <property type="match status" value="1"/>
</dbReference>
<dbReference type="SUPFAM" id="SSF48576">
    <property type="entry name" value="Terpenoid synthases"/>
    <property type="match status" value="1"/>
</dbReference>
<keyword id="KW-0456">Lyase</keyword>
<keyword id="KW-0460">Magnesium</keyword>
<keyword id="KW-0464">Manganese</keyword>
<keyword id="KW-0479">Metal-binding</keyword>
<protein>
    <recommendedName>
        <fullName>(-)-beta-caryophyllene synthase</fullName>
        <ecNumber>4.2.3.57</ecNumber>
    </recommendedName>
    <alternativeName>
        <fullName>Terpene synthase 1</fullName>
    </alternativeName>
</protein>
<name>TPS1_MATCR</name>
<comment type="function">
    <text evidence="2">Sesquiterpene synthase involved in the biosynthesis of beta-caryophyllene as the major product and trace amounts of alpha-humulene. Produces exclusively the (-)-(E)-beta caryophyllene enantiomer.</text>
</comment>
<comment type="catalytic activity">
    <reaction evidence="2">
        <text>(2E,6E)-farnesyl diphosphate = (-)-(E)-beta-caryophyllene + diphosphate</text>
        <dbReference type="Rhea" id="RHEA:28294"/>
        <dbReference type="ChEBI" id="CHEBI:10357"/>
        <dbReference type="ChEBI" id="CHEBI:33019"/>
        <dbReference type="ChEBI" id="CHEBI:175763"/>
        <dbReference type="EC" id="4.2.3.57"/>
    </reaction>
</comment>
<comment type="cofactor">
    <cofactor evidence="1">
        <name>Mg(2+)</name>
        <dbReference type="ChEBI" id="CHEBI:18420"/>
    </cofactor>
    <cofactor evidence="1">
        <name>Mn(2+)</name>
        <dbReference type="ChEBI" id="CHEBI:29035"/>
    </cofactor>
    <text evidence="1">Binds 3 Mg(2+) or Mn(2+) ions per subunit.</text>
</comment>
<comment type="pathway">
    <text>Secondary metabolite biosynthesis; terpenoid biosynthesis.</text>
</comment>
<comment type="tissue specificity">
    <text evidence="2">High expression in disk florets, moderate expression in ray florets and detected in leaves and stems, but not in roots.</text>
</comment>
<comment type="domain">
    <text evidence="1">The Asp-Asp-Xaa-Xaa-Asp/Glu (DDXXD/E) motif is important for the catalytic activity, presumably through binding to Mg(2+).</text>
</comment>
<comment type="similarity">
    <text evidence="3">Belongs to the terpene synthase family. Tpsa subfamily.</text>
</comment>
<reference key="1">
    <citation type="journal article" date="2012" name="BMC Plant Biol.">
        <title>The organ-specific expression of terpene synthase genes contributes to the terpene hydrocarbon composition of chamomile essential oils.</title>
        <authorList>
            <person name="Irmisch S."/>
            <person name="Krause S.T."/>
            <person name="Kunert G."/>
            <person name="Gershenzon J."/>
            <person name="Degenhardt J."/>
            <person name="Koellner T.G."/>
        </authorList>
    </citation>
    <scope>NUCLEOTIDE SEQUENCE [MRNA]</scope>
    <scope>FUNCTION</scope>
    <scope>CATALYTIC ACTIVITY</scope>
    <scope>TISSUE SPECIFICITY</scope>
    <source>
        <strain>cv. Bodegold</strain>
    </source>
</reference>